<dbReference type="EMBL" id="CP001280">
    <property type="protein sequence ID" value="ACK49868.1"/>
    <property type="molecule type" value="Genomic_DNA"/>
</dbReference>
<dbReference type="RefSeq" id="WP_012589938.1">
    <property type="nucleotide sequence ID" value="NC_011666.1"/>
</dbReference>
<dbReference type="SMR" id="B8ESH8"/>
<dbReference type="STRING" id="395965.Msil_0898"/>
<dbReference type="KEGG" id="msl:Msil_0898"/>
<dbReference type="eggNOG" id="COG0360">
    <property type="taxonomic scope" value="Bacteria"/>
</dbReference>
<dbReference type="HOGENOM" id="CLU_113441_2_0_5"/>
<dbReference type="OrthoDB" id="9812702at2"/>
<dbReference type="Proteomes" id="UP000002257">
    <property type="component" value="Chromosome"/>
</dbReference>
<dbReference type="GO" id="GO:0022627">
    <property type="term" value="C:cytosolic small ribosomal subunit"/>
    <property type="evidence" value="ECO:0007669"/>
    <property type="project" value="TreeGrafter"/>
</dbReference>
<dbReference type="GO" id="GO:0070181">
    <property type="term" value="F:small ribosomal subunit rRNA binding"/>
    <property type="evidence" value="ECO:0007669"/>
    <property type="project" value="TreeGrafter"/>
</dbReference>
<dbReference type="GO" id="GO:0003735">
    <property type="term" value="F:structural constituent of ribosome"/>
    <property type="evidence" value="ECO:0007669"/>
    <property type="project" value="InterPro"/>
</dbReference>
<dbReference type="GO" id="GO:0006412">
    <property type="term" value="P:translation"/>
    <property type="evidence" value="ECO:0007669"/>
    <property type="project" value="UniProtKB-UniRule"/>
</dbReference>
<dbReference type="CDD" id="cd00473">
    <property type="entry name" value="bS6"/>
    <property type="match status" value="1"/>
</dbReference>
<dbReference type="Gene3D" id="3.30.70.60">
    <property type="match status" value="1"/>
</dbReference>
<dbReference type="HAMAP" id="MF_00360">
    <property type="entry name" value="Ribosomal_bS6"/>
    <property type="match status" value="1"/>
</dbReference>
<dbReference type="InterPro" id="IPR000529">
    <property type="entry name" value="Ribosomal_bS6"/>
</dbReference>
<dbReference type="InterPro" id="IPR035980">
    <property type="entry name" value="Ribosomal_bS6_sf"/>
</dbReference>
<dbReference type="InterPro" id="IPR020814">
    <property type="entry name" value="Ribosomal_S6_plastid/chlpt"/>
</dbReference>
<dbReference type="InterPro" id="IPR014717">
    <property type="entry name" value="Transl_elong_EF1B/ribsomal_bS6"/>
</dbReference>
<dbReference type="NCBIfam" id="TIGR00166">
    <property type="entry name" value="S6"/>
    <property type="match status" value="1"/>
</dbReference>
<dbReference type="PANTHER" id="PTHR21011">
    <property type="entry name" value="MITOCHONDRIAL 28S RIBOSOMAL PROTEIN S6"/>
    <property type="match status" value="1"/>
</dbReference>
<dbReference type="PANTHER" id="PTHR21011:SF1">
    <property type="entry name" value="SMALL RIBOSOMAL SUBUNIT PROTEIN BS6M"/>
    <property type="match status" value="1"/>
</dbReference>
<dbReference type="Pfam" id="PF01250">
    <property type="entry name" value="Ribosomal_S6"/>
    <property type="match status" value="1"/>
</dbReference>
<dbReference type="SUPFAM" id="SSF54995">
    <property type="entry name" value="Ribosomal protein S6"/>
    <property type="match status" value="1"/>
</dbReference>
<accession>B8ESH8</accession>
<reference key="1">
    <citation type="journal article" date="2010" name="J. Bacteriol.">
        <title>Complete genome sequence of the aerobic facultative methanotroph Methylocella silvestris BL2.</title>
        <authorList>
            <person name="Chen Y."/>
            <person name="Crombie A."/>
            <person name="Rahman M.T."/>
            <person name="Dedysh S.N."/>
            <person name="Liesack W."/>
            <person name="Stott M.B."/>
            <person name="Alam M."/>
            <person name="Theisen A.R."/>
            <person name="Murrell J.C."/>
            <person name="Dunfield P.F."/>
        </authorList>
    </citation>
    <scope>NUCLEOTIDE SEQUENCE [LARGE SCALE GENOMIC DNA]</scope>
    <source>
        <strain>DSM 15510 / CIP 108128 / LMG 27833 / NCIMB 13906 / BL2</strain>
    </source>
</reference>
<protein>
    <recommendedName>
        <fullName evidence="1">Small ribosomal subunit protein bS6</fullName>
    </recommendedName>
    <alternativeName>
        <fullName evidence="3">30S ribosomal protein S6</fullName>
    </alternativeName>
</protein>
<keyword id="KW-1185">Reference proteome</keyword>
<keyword id="KW-0687">Ribonucleoprotein</keyword>
<keyword id="KW-0689">Ribosomal protein</keyword>
<keyword id="KW-0694">RNA-binding</keyword>
<keyword id="KW-0699">rRNA-binding</keyword>
<name>RS6_METSB</name>
<feature type="chain" id="PRO_1000133536" description="Small ribosomal subunit protein bS6">
    <location>
        <begin position="1"/>
        <end position="146"/>
    </location>
</feature>
<feature type="region of interest" description="Disordered" evidence="2">
    <location>
        <begin position="100"/>
        <end position="146"/>
    </location>
</feature>
<feature type="compositionally biased region" description="Basic and acidic residues" evidence="2">
    <location>
        <begin position="105"/>
        <end position="138"/>
    </location>
</feature>
<organism>
    <name type="scientific">Methylocella silvestris (strain DSM 15510 / CIP 108128 / LMG 27833 / NCIMB 13906 / BL2)</name>
    <dbReference type="NCBI Taxonomy" id="395965"/>
    <lineage>
        <taxon>Bacteria</taxon>
        <taxon>Pseudomonadati</taxon>
        <taxon>Pseudomonadota</taxon>
        <taxon>Alphaproteobacteria</taxon>
        <taxon>Hyphomicrobiales</taxon>
        <taxon>Beijerinckiaceae</taxon>
        <taxon>Methylocella</taxon>
    </lineage>
</organism>
<proteinExistence type="inferred from homology"/>
<gene>
    <name evidence="1" type="primary">rpsF</name>
    <name type="ordered locus">Msil_0898</name>
</gene>
<evidence type="ECO:0000255" key="1">
    <source>
        <dbReference type="HAMAP-Rule" id="MF_00360"/>
    </source>
</evidence>
<evidence type="ECO:0000256" key="2">
    <source>
        <dbReference type="SAM" id="MobiDB-lite"/>
    </source>
</evidence>
<evidence type="ECO:0000305" key="3"/>
<comment type="function">
    <text evidence="1">Binds together with bS18 to 16S ribosomal RNA.</text>
</comment>
<comment type="similarity">
    <text evidence="1">Belongs to the bacterial ribosomal protein bS6 family.</text>
</comment>
<sequence length="146" mass="16595">MALYEHIYLARQDVSAQQVETLTEQFRGIIESLGGKIEKVEYWGVKTLAYRIKKNRKAHFTLLNIDAPAAAITEMERQSSLNEDVLRLLTIRVEALEAGQSAMMRKRDDDDRGDRPDRGDRGRGPRPDRPPRRPRDDAAASDEGGF</sequence>